<keyword id="KW-0963">Cytoplasm</keyword>
<keyword id="KW-0251">Elongation factor</keyword>
<keyword id="KW-0342">GTP-binding</keyword>
<keyword id="KW-0378">Hydrolase</keyword>
<keyword id="KW-0460">Magnesium</keyword>
<keyword id="KW-0479">Metal-binding</keyword>
<keyword id="KW-0547">Nucleotide-binding</keyword>
<keyword id="KW-0648">Protein biosynthesis</keyword>
<keyword id="KW-1185">Reference proteome</keyword>
<accession>A8EW02</accession>
<proteinExistence type="inferred from homology"/>
<evidence type="ECO:0000250" key="1"/>
<evidence type="ECO:0000255" key="2">
    <source>
        <dbReference type="HAMAP-Rule" id="MF_00118"/>
    </source>
</evidence>
<reference key="1">
    <citation type="journal article" date="2007" name="PLoS ONE">
        <title>The complete genome sequence and analysis of the Epsilonproteobacterium Arcobacter butzleri.</title>
        <authorList>
            <person name="Miller W.G."/>
            <person name="Parker C.T."/>
            <person name="Rubenfield M."/>
            <person name="Mendz G.L."/>
            <person name="Woesten M.M.S.M."/>
            <person name="Ussery D.W."/>
            <person name="Stolz J.F."/>
            <person name="Binnewies T.T."/>
            <person name="Hallin P.F."/>
            <person name="Wang G."/>
            <person name="Malek J.A."/>
            <person name="Rogosin A."/>
            <person name="Stanker L.H."/>
            <person name="Mandrell R.E."/>
        </authorList>
    </citation>
    <scope>NUCLEOTIDE SEQUENCE [LARGE SCALE GENOMIC DNA]</scope>
    <source>
        <strain>RM4018</strain>
    </source>
</reference>
<sequence length="402" mass="43951">MAKEKFSRNKPHVNIGTIGHVDHGKTTLTAAISAVLAVKYGGEMKDYDQIDNAPEERERGITIATSHIEYETAKRHYAHVDCPGHADYVKNMITGAAQMDGAILVIASTDGPMAQTREHILLSKQVGVPYIVVFMNKEDQLDPQDKEEMLELVEMEIRELLSTYDFPGDDTPIIAGSAFQALEEAKAGAVGPWGEKIVALMDAVDEYIPTPERDIDQAFLMPVEDVFSISGRGTVVTGRIEKGTIKVGEEIEIVGFGDTRKTTVTGVEMFRKEMDQGQAGDNCGILLRGIKKEDVERGQVLVKPGTITPHTKFRCEVYILSKEEGGRHTPFFSGYRPQFYVRTTDVTGSCTLPEGTEMVMPGDNVEMTVELVAPIALDKGTKFAIREGGRTVGAGVVAEIIA</sequence>
<comment type="function">
    <text evidence="2">GTP hydrolase that promotes the GTP-dependent binding of aminoacyl-tRNA to the A-site of ribosomes during protein biosynthesis.</text>
</comment>
<comment type="catalytic activity">
    <reaction evidence="2">
        <text>GTP + H2O = GDP + phosphate + H(+)</text>
        <dbReference type="Rhea" id="RHEA:19669"/>
        <dbReference type="ChEBI" id="CHEBI:15377"/>
        <dbReference type="ChEBI" id="CHEBI:15378"/>
        <dbReference type="ChEBI" id="CHEBI:37565"/>
        <dbReference type="ChEBI" id="CHEBI:43474"/>
        <dbReference type="ChEBI" id="CHEBI:58189"/>
        <dbReference type="EC" id="3.6.5.3"/>
    </reaction>
    <physiologicalReaction direction="left-to-right" evidence="2">
        <dbReference type="Rhea" id="RHEA:19670"/>
    </physiologicalReaction>
</comment>
<comment type="subunit">
    <text evidence="2">Monomer.</text>
</comment>
<comment type="subcellular location">
    <subcellularLocation>
        <location evidence="2">Cytoplasm</location>
    </subcellularLocation>
</comment>
<comment type="similarity">
    <text evidence="2">Belongs to the TRAFAC class translation factor GTPase superfamily. Classic translation factor GTPase family. EF-Tu/EF-1A subfamily.</text>
</comment>
<name>EFTU_ALIB4</name>
<protein>
    <recommendedName>
        <fullName evidence="2">Elongation factor Tu</fullName>
        <shortName evidence="2">EF-Tu</shortName>
        <ecNumber evidence="2">3.6.5.3</ecNumber>
    </recommendedName>
</protein>
<gene>
    <name evidence="2" type="primary">tuf</name>
    <name type="ordered locus">Abu_1893</name>
</gene>
<dbReference type="EC" id="3.6.5.3" evidence="2"/>
<dbReference type="EMBL" id="CP000361">
    <property type="protein sequence ID" value="ABV68125.1"/>
    <property type="molecule type" value="Genomic_DNA"/>
</dbReference>
<dbReference type="RefSeq" id="WP_004511262.1">
    <property type="nucleotide sequence ID" value="NC_009850.1"/>
</dbReference>
<dbReference type="SMR" id="A8EW02"/>
<dbReference type="STRING" id="367737.Abu_1893"/>
<dbReference type="GeneID" id="24305538"/>
<dbReference type="KEGG" id="abu:Abu_1893"/>
<dbReference type="eggNOG" id="COG0050">
    <property type="taxonomic scope" value="Bacteria"/>
</dbReference>
<dbReference type="HOGENOM" id="CLU_007265_0_1_7"/>
<dbReference type="Proteomes" id="UP000001136">
    <property type="component" value="Chromosome"/>
</dbReference>
<dbReference type="GO" id="GO:0005829">
    <property type="term" value="C:cytosol"/>
    <property type="evidence" value="ECO:0007669"/>
    <property type="project" value="TreeGrafter"/>
</dbReference>
<dbReference type="GO" id="GO:0005525">
    <property type="term" value="F:GTP binding"/>
    <property type="evidence" value="ECO:0007669"/>
    <property type="project" value="UniProtKB-UniRule"/>
</dbReference>
<dbReference type="GO" id="GO:0003924">
    <property type="term" value="F:GTPase activity"/>
    <property type="evidence" value="ECO:0007669"/>
    <property type="project" value="InterPro"/>
</dbReference>
<dbReference type="GO" id="GO:0003746">
    <property type="term" value="F:translation elongation factor activity"/>
    <property type="evidence" value="ECO:0007669"/>
    <property type="project" value="UniProtKB-UniRule"/>
</dbReference>
<dbReference type="CDD" id="cd01884">
    <property type="entry name" value="EF_Tu"/>
    <property type="match status" value="1"/>
</dbReference>
<dbReference type="CDD" id="cd03697">
    <property type="entry name" value="EFTU_II"/>
    <property type="match status" value="1"/>
</dbReference>
<dbReference type="CDD" id="cd03707">
    <property type="entry name" value="EFTU_III"/>
    <property type="match status" value="1"/>
</dbReference>
<dbReference type="FunFam" id="2.40.30.10:FF:000001">
    <property type="entry name" value="Elongation factor Tu"/>
    <property type="match status" value="1"/>
</dbReference>
<dbReference type="FunFam" id="3.40.50.300:FF:000003">
    <property type="entry name" value="Elongation factor Tu"/>
    <property type="match status" value="1"/>
</dbReference>
<dbReference type="Gene3D" id="3.40.50.300">
    <property type="entry name" value="P-loop containing nucleotide triphosphate hydrolases"/>
    <property type="match status" value="1"/>
</dbReference>
<dbReference type="Gene3D" id="2.40.30.10">
    <property type="entry name" value="Translation factors"/>
    <property type="match status" value="2"/>
</dbReference>
<dbReference type="HAMAP" id="MF_00118_B">
    <property type="entry name" value="EF_Tu_B"/>
    <property type="match status" value="1"/>
</dbReference>
<dbReference type="InterPro" id="IPR041709">
    <property type="entry name" value="EF-Tu_GTP-bd"/>
</dbReference>
<dbReference type="InterPro" id="IPR050055">
    <property type="entry name" value="EF-Tu_GTPase"/>
</dbReference>
<dbReference type="InterPro" id="IPR004161">
    <property type="entry name" value="EFTu-like_2"/>
</dbReference>
<dbReference type="InterPro" id="IPR033720">
    <property type="entry name" value="EFTU_2"/>
</dbReference>
<dbReference type="InterPro" id="IPR031157">
    <property type="entry name" value="G_TR_CS"/>
</dbReference>
<dbReference type="InterPro" id="IPR027417">
    <property type="entry name" value="P-loop_NTPase"/>
</dbReference>
<dbReference type="InterPro" id="IPR005225">
    <property type="entry name" value="Small_GTP-bd"/>
</dbReference>
<dbReference type="InterPro" id="IPR000795">
    <property type="entry name" value="T_Tr_GTP-bd_dom"/>
</dbReference>
<dbReference type="InterPro" id="IPR009000">
    <property type="entry name" value="Transl_B-barrel_sf"/>
</dbReference>
<dbReference type="InterPro" id="IPR009001">
    <property type="entry name" value="Transl_elong_EF1A/Init_IF2_C"/>
</dbReference>
<dbReference type="InterPro" id="IPR004541">
    <property type="entry name" value="Transl_elong_EFTu/EF1A_bac/org"/>
</dbReference>
<dbReference type="InterPro" id="IPR004160">
    <property type="entry name" value="Transl_elong_EFTu/EF1A_C"/>
</dbReference>
<dbReference type="NCBIfam" id="TIGR00485">
    <property type="entry name" value="EF-Tu"/>
    <property type="match status" value="1"/>
</dbReference>
<dbReference type="NCBIfam" id="NF000766">
    <property type="entry name" value="PRK00049.1"/>
    <property type="match status" value="1"/>
</dbReference>
<dbReference type="NCBIfam" id="NF009372">
    <property type="entry name" value="PRK12735.1"/>
    <property type="match status" value="1"/>
</dbReference>
<dbReference type="NCBIfam" id="NF009373">
    <property type="entry name" value="PRK12736.1"/>
    <property type="match status" value="1"/>
</dbReference>
<dbReference type="NCBIfam" id="TIGR00231">
    <property type="entry name" value="small_GTP"/>
    <property type="match status" value="1"/>
</dbReference>
<dbReference type="PANTHER" id="PTHR43721:SF22">
    <property type="entry name" value="ELONGATION FACTOR TU, MITOCHONDRIAL"/>
    <property type="match status" value="1"/>
</dbReference>
<dbReference type="PANTHER" id="PTHR43721">
    <property type="entry name" value="ELONGATION FACTOR TU-RELATED"/>
    <property type="match status" value="1"/>
</dbReference>
<dbReference type="Pfam" id="PF00009">
    <property type="entry name" value="GTP_EFTU"/>
    <property type="match status" value="1"/>
</dbReference>
<dbReference type="Pfam" id="PF03144">
    <property type="entry name" value="GTP_EFTU_D2"/>
    <property type="match status" value="1"/>
</dbReference>
<dbReference type="Pfam" id="PF03143">
    <property type="entry name" value="GTP_EFTU_D3"/>
    <property type="match status" value="1"/>
</dbReference>
<dbReference type="PRINTS" id="PR00315">
    <property type="entry name" value="ELONGATNFCT"/>
</dbReference>
<dbReference type="SUPFAM" id="SSF50465">
    <property type="entry name" value="EF-Tu/eEF-1alpha/eIF2-gamma C-terminal domain"/>
    <property type="match status" value="1"/>
</dbReference>
<dbReference type="SUPFAM" id="SSF52540">
    <property type="entry name" value="P-loop containing nucleoside triphosphate hydrolases"/>
    <property type="match status" value="1"/>
</dbReference>
<dbReference type="SUPFAM" id="SSF50447">
    <property type="entry name" value="Translation proteins"/>
    <property type="match status" value="1"/>
</dbReference>
<dbReference type="PROSITE" id="PS00301">
    <property type="entry name" value="G_TR_1"/>
    <property type="match status" value="1"/>
</dbReference>
<dbReference type="PROSITE" id="PS51722">
    <property type="entry name" value="G_TR_2"/>
    <property type="match status" value="1"/>
</dbReference>
<organism>
    <name type="scientific">Aliarcobacter butzleri (strain RM4018)</name>
    <name type="common">Arcobacter butzleri</name>
    <dbReference type="NCBI Taxonomy" id="367737"/>
    <lineage>
        <taxon>Bacteria</taxon>
        <taxon>Pseudomonadati</taxon>
        <taxon>Campylobacterota</taxon>
        <taxon>Epsilonproteobacteria</taxon>
        <taxon>Campylobacterales</taxon>
        <taxon>Arcobacteraceae</taxon>
        <taxon>Aliarcobacter</taxon>
    </lineage>
</organism>
<feature type="chain" id="PRO_1000057789" description="Elongation factor Tu">
    <location>
        <begin position="1"/>
        <end position="402"/>
    </location>
</feature>
<feature type="domain" description="tr-type G">
    <location>
        <begin position="10"/>
        <end position="212"/>
    </location>
</feature>
<feature type="region of interest" description="G1" evidence="1">
    <location>
        <begin position="19"/>
        <end position="26"/>
    </location>
</feature>
<feature type="region of interest" description="G2" evidence="1">
    <location>
        <begin position="60"/>
        <end position="64"/>
    </location>
</feature>
<feature type="region of interest" description="G3" evidence="1">
    <location>
        <begin position="81"/>
        <end position="84"/>
    </location>
</feature>
<feature type="region of interest" description="G4" evidence="1">
    <location>
        <begin position="136"/>
        <end position="139"/>
    </location>
</feature>
<feature type="region of interest" description="G5" evidence="1">
    <location>
        <begin position="177"/>
        <end position="179"/>
    </location>
</feature>
<feature type="binding site" evidence="2">
    <location>
        <begin position="19"/>
        <end position="26"/>
    </location>
    <ligand>
        <name>GTP</name>
        <dbReference type="ChEBI" id="CHEBI:37565"/>
    </ligand>
</feature>
<feature type="binding site" evidence="2">
    <location>
        <position position="26"/>
    </location>
    <ligand>
        <name>Mg(2+)</name>
        <dbReference type="ChEBI" id="CHEBI:18420"/>
    </ligand>
</feature>
<feature type="binding site" evidence="2">
    <location>
        <begin position="81"/>
        <end position="85"/>
    </location>
    <ligand>
        <name>GTP</name>
        <dbReference type="ChEBI" id="CHEBI:37565"/>
    </ligand>
</feature>
<feature type="binding site" evidence="2">
    <location>
        <begin position="136"/>
        <end position="139"/>
    </location>
    <ligand>
        <name>GTP</name>
        <dbReference type="ChEBI" id="CHEBI:37565"/>
    </ligand>
</feature>